<name>RS3_ELUMP</name>
<sequence length="239" mass="26646">MGHKINPKGLRLGYTQDWQSRWFAPKNMPALIIEDKRIRELIEERFKMAAISFVGIERAGAFLRINIHTARPGVVIGKKGADIEQLRKDLEKMTGSKTFVNVVEIKNPETDASLVAQSICMQIEKRAHYGAAMKKAIEKALAGKALGIKIMVSGRLGGAEIARTEWKREGRVPLHTLCAEIDYGTAEAMTISGKIGCKVWIFKKTHFAKSPKEILHELRKHREVTETPSGSAETVTEAK</sequence>
<evidence type="ECO:0000255" key="1">
    <source>
        <dbReference type="HAMAP-Rule" id="MF_01309"/>
    </source>
</evidence>
<evidence type="ECO:0000305" key="2"/>
<protein>
    <recommendedName>
        <fullName evidence="1">Small ribosomal subunit protein uS3</fullName>
    </recommendedName>
    <alternativeName>
        <fullName evidence="2">30S ribosomal protein S3</fullName>
    </alternativeName>
</protein>
<accession>B2KEL5</accession>
<gene>
    <name evidence="1" type="primary">rpsC</name>
    <name type="ordered locus">Emin_1412</name>
</gene>
<organism>
    <name type="scientific">Elusimicrobium minutum (strain Pei191)</name>
    <dbReference type="NCBI Taxonomy" id="445932"/>
    <lineage>
        <taxon>Bacteria</taxon>
        <taxon>Pseudomonadati</taxon>
        <taxon>Elusimicrobiota</taxon>
        <taxon>Elusimicrobia</taxon>
        <taxon>Elusimicrobiales</taxon>
        <taxon>Elusimicrobiaceae</taxon>
        <taxon>Elusimicrobium</taxon>
    </lineage>
</organism>
<keyword id="KW-1185">Reference proteome</keyword>
<keyword id="KW-0687">Ribonucleoprotein</keyword>
<keyword id="KW-0689">Ribosomal protein</keyword>
<keyword id="KW-0694">RNA-binding</keyword>
<keyword id="KW-0699">rRNA-binding</keyword>
<proteinExistence type="inferred from homology"/>
<feature type="chain" id="PRO_1000140967" description="Small ribosomal subunit protein uS3">
    <location>
        <begin position="1"/>
        <end position="239"/>
    </location>
</feature>
<feature type="domain" description="KH type-2" evidence="1">
    <location>
        <begin position="38"/>
        <end position="106"/>
    </location>
</feature>
<reference key="1">
    <citation type="journal article" date="2009" name="Appl. Environ. Microbiol.">
        <title>Genomic analysis of 'Elusimicrobium minutum,' the first cultivated representative of the phylum 'Elusimicrobia' (formerly termite group 1).</title>
        <authorList>
            <person name="Herlemann D.P.R."/>
            <person name="Geissinger O."/>
            <person name="Ikeda-Ohtsubo W."/>
            <person name="Kunin V."/>
            <person name="Sun H."/>
            <person name="Lapidus A."/>
            <person name="Hugenholtz P."/>
            <person name="Brune A."/>
        </authorList>
    </citation>
    <scope>NUCLEOTIDE SEQUENCE [LARGE SCALE GENOMIC DNA]</scope>
    <source>
        <strain>Pei191</strain>
    </source>
</reference>
<dbReference type="EMBL" id="CP001055">
    <property type="protein sequence ID" value="ACC98961.1"/>
    <property type="molecule type" value="Genomic_DNA"/>
</dbReference>
<dbReference type="RefSeq" id="WP_012415576.1">
    <property type="nucleotide sequence ID" value="NC_010644.1"/>
</dbReference>
<dbReference type="SMR" id="B2KEL5"/>
<dbReference type="STRING" id="445932.Emin_1412"/>
<dbReference type="KEGG" id="emi:Emin_1412"/>
<dbReference type="HOGENOM" id="CLU_058591_0_2_0"/>
<dbReference type="OrthoDB" id="9806396at2"/>
<dbReference type="Proteomes" id="UP000001029">
    <property type="component" value="Chromosome"/>
</dbReference>
<dbReference type="GO" id="GO:0022627">
    <property type="term" value="C:cytosolic small ribosomal subunit"/>
    <property type="evidence" value="ECO:0007669"/>
    <property type="project" value="TreeGrafter"/>
</dbReference>
<dbReference type="GO" id="GO:0003729">
    <property type="term" value="F:mRNA binding"/>
    <property type="evidence" value="ECO:0007669"/>
    <property type="project" value="UniProtKB-UniRule"/>
</dbReference>
<dbReference type="GO" id="GO:0019843">
    <property type="term" value="F:rRNA binding"/>
    <property type="evidence" value="ECO:0007669"/>
    <property type="project" value="UniProtKB-UniRule"/>
</dbReference>
<dbReference type="GO" id="GO:0003735">
    <property type="term" value="F:structural constituent of ribosome"/>
    <property type="evidence" value="ECO:0007669"/>
    <property type="project" value="InterPro"/>
</dbReference>
<dbReference type="GO" id="GO:0006412">
    <property type="term" value="P:translation"/>
    <property type="evidence" value="ECO:0007669"/>
    <property type="project" value="UniProtKB-UniRule"/>
</dbReference>
<dbReference type="CDD" id="cd02412">
    <property type="entry name" value="KH-II_30S_S3"/>
    <property type="match status" value="1"/>
</dbReference>
<dbReference type="FunFam" id="3.30.300.20:FF:000001">
    <property type="entry name" value="30S ribosomal protein S3"/>
    <property type="match status" value="1"/>
</dbReference>
<dbReference type="Gene3D" id="3.30.300.20">
    <property type="match status" value="1"/>
</dbReference>
<dbReference type="Gene3D" id="3.30.1140.32">
    <property type="entry name" value="Ribosomal protein S3, C-terminal domain"/>
    <property type="match status" value="1"/>
</dbReference>
<dbReference type="HAMAP" id="MF_01309_B">
    <property type="entry name" value="Ribosomal_uS3_B"/>
    <property type="match status" value="1"/>
</dbReference>
<dbReference type="InterPro" id="IPR004087">
    <property type="entry name" value="KH_dom"/>
</dbReference>
<dbReference type="InterPro" id="IPR015946">
    <property type="entry name" value="KH_dom-like_a/b"/>
</dbReference>
<dbReference type="InterPro" id="IPR004044">
    <property type="entry name" value="KH_dom_type_2"/>
</dbReference>
<dbReference type="InterPro" id="IPR009019">
    <property type="entry name" value="KH_sf_prok-type"/>
</dbReference>
<dbReference type="InterPro" id="IPR036419">
    <property type="entry name" value="Ribosomal_S3_C_sf"/>
</dbReference>
<dbReference type="InterPro" id="IPR005704">
    <property type="entry name" value="Ribosomal_uS3_bac-typ"/>
</dbReference>
<dbReference type="InterPro" id="IPR001351">
    <property type="entry name" value="Ribosomal_uS3_C"/>
</dbReference>
<dbReference type="InterPro" id="IPR018280">
    <property type="entry name" value="Ribosomal_uS3_CS"/>
</dbReference>
<dbReference type="NCBIfam" id="TIGR01009">
    <property type="entry name" value="rpsC_bact"/>
    <property type="match status" value="1"/>
</dbReference>
<dbReference type="PANTHER" id="PTHR11760">
    <property type="entry name" value="30S/40S RIBOSOMAL PROTEIN S3"/>
    <property type="match status" value="1"/>
</dbReference>
<dbReference type="PANTHER" id="PTHR11760:SF19">
    <property type="entry name" value="SMALL RIBOSOMAL SUBUNIT PROTEIN US3C"/>
    <property type="match status" value="1"/>
</dbReference>
<dbReference type="Pfam" id="PF07650">
    <property type="entry name" value="KH_2"/>
    <property type="match status" value="1"/>
</dbReference>
<dbReference type="Pfam" id="PF00189">
    <property type="entry name" value="Ribosomal_S3_C"/>
    <property type="match status" value="1"/>
</dbReference>
<dbReference type="SMART" id="SM00322">
    <property type="entry name" value="KH"/>
    <property type="match status" value="1"/>
</dbReference>
<dbReference type="SUPFAM" id="SSF54814">
    <property type="entry name" value="Prokaryotic type KH domain (KH-domain type II)"/>
    <property type="match status" value="1"/>
</dbReference>
<dbReference type="SUPFAM" id="SSF54821">
    <property type="entry name" value="Ribosomal protein S3 C-terminal domain"/>
    <property type="match status" value="1"/>
</dbReference>
<dbReference type="PROSITE" id="PS50823">
    <property type="entry name" value="KH_TYPE_2"/>
    <property type="match status" value="1"/>
</dbReference>
<dbReference type="PROSITE" id="PS00548">
    <property type="entry name" value="RIBOSOMAL_S3"/>
    <property type="match status" value="1"/>
</dbReference>
<comment type="function">
    <text evidence="1">Binds the lower part of the 30S subunit head. Binds mRNA in the 70S ribosome, positioning it for translation.</text>
</comment>
<comment type="subunit">
    <text evidence="1">Part of the 30S ribosomal subunit. Forms a tight complex with proteins S10 and S14.</text>
</comment>
<comment type="similarity">
    <text evidence="1">Belongs to the universal ribosomal protein uS3 family.</text>
</comment>